<accession>Q0T7E5</accession>
<proteinExistence type="inferred from homology"/>
<reference key="1">
    <citation type="journal article" date="2006" name="BMC Genomics">
        <title>Complete genome sequence of Shigella flexneri 5b and comparison with Shigella flexneri 2a.</title>
        <authorList>
            <person name="Nie H."/>
            <person name="Yang F."/>
            <person name="Zhang X."/>
            <person name="Yang J."/>
            <person name="Chen L."/>
            <person name="Wang J."/>
            <person name="Xiong Z."/>
            <person name="Peng J."/>
            <person name="Sun L."/>
            <person name="Dong J."/>
            <person name="Xue Y."/>
            <person name="Xu X."/>
            <person name="Chen S."/>
            <person name="Yao Z."/>
            <person name="Shen Y."/>
            <person name="Jin Q."/>
        </authorList>
    </citation>
    <scope>NUCLEOTIDE SEQUENCE [LARGE SCALE GENOMIC DNA]</scope>
    <source>
        <strain>8401</strain>
    </source>
</reference>
<comment type="function">
    <text evidence="1">ATP-dependent specificity component of the Clp protease. It directs the protease to specific substrates. Can perform chaperone functions in the absence of ClpP.</text>
</comment>
<comment type="subunit">
    <text evidence="1">Component of the ClpX-ClpP complex. Forms a hexameric ring that, in the presence of ATP, binds to fourteen ClpP subunits assembled into a disk-like structure with a central cavity, resembling the structure of eukaryotic proteasomes.</text>
</comment>
<comment type="similarity">
    <text evidence="1">Belongs to the ClpX chaperone family.</text>
</comment>
<keyword id="KW-0067">ATP-binding</keyword>
<keyword id="KW-0143">Chaperone</keyword>
<keyword id="KW-0479">Metal-binding</keyword>
<keyword id="KW-0547">Nucleotide-binding</keyword>
<keyword id="KW-0862">Zinc</keyword>
<gene>
    <name evidence="1" type="primary">clpX</name>
    <name type="ordered locus">SFV_0412</name>
</gene>
<feature type="chain" id="PRO_1000024662" description="ATP-dependent Clp protease ATP-binding subunit ClpX">
    <location>
        <begin position="1"/>
        <end position="424"/>
    </location>
</feature>
<feature type="domain" description="ClpX-type ZB" evidence="2">
    <location>
        <begin position="2"/>
        <end position="56"/>
    </location>
</feature>
<feature type="binding site" evidence="2">
    <location>
        <position position="15"/>
    </location>
    <ligand>
        <name>Zn(2+)</name>
        <dbReference type="ChEBI" id="CHEBI:29105"/>
    </ligand>
</feature>
<feature type="binding site" evidence="2">
    <location>
        <position position="18"/>
    </location>
    <ligand>
        <name>Zn(2+)</name>
        <dbReference type="ChEBI" id="CHEBI:29105"/>
    </ligand>
</feature>
<feature type="binding site" evidence="2">
    <location>
        <position position="37"/>
    </location>
    <ligand>
        <name>Zn(2+)</name>
        <dbReference type="ChEBI" id="CHEBI:29105"/>
    </ligand>
</feature>
<feature type="binding site" evidence="2">
    <location>
        <position position="40"/>
    </location>
    <ligand>
        <name>Zn(2+)</name>
        <dbReference type="ChEBI" id="CHEBI:29105"/>
    </ligand>
</feature>
<feature type="binding site" evidence="1">
    <location>
        <begin position="120"/>
        <end position="127"/>
    </location>
    <ligand>
        <name>ATP</name>
        <dbReference type="ChEBI" id="CHEBI:30616"/>
    </ligand>
</feature>
<dbReference type="EMBL" id="CP000266">
    <property type="protein sequence ID" value="ABF02681.1"/>
    <property type="molecule type" value="Genomic_DNA"/>
</dbReference>
<dbReference type="RefSeq" id="WP_000130305.1">
    <property type="nucleotide sequence ID" value="NC_008258.1"/>
</dbReference>
<dbReference type="SMR" id="Q0T7E5"/>
<dbReference type="GeneID" id="93777016"/>
<dbReference type="KEGG" id="sfv:SFV_0412"/>
<dbReference type="HOGENOM" id="CLU_014218_8_2_6"/>
<dbReference type="Proteomes" id="UP000000659">
    <property type="component" value="Chromosome"/>
</dbReference>
<dbReference type="GO" id="GO:0009376">
    <property type="term" value="C:HslUV protease complex"/>
    <property type="evidence" value="ECO:0007669"/>
    <property type="project" value="TreeGrafter"/>
</dbReference>
<dbReference type="GO" id="GO:0005524">
    <property type="term" value="F:ATP binding"/>
    <property type="evidence" value="ECO:0007669"/>
    <property type="project" value="UniProtKB-UniRule"/>
</dbReference>
<dbReference type="GO" id="GO:0016887">
    <property type="term" value="F:ATP hydrolysis activity"/>
    <property type="evidence" value="ECO:0007669"/>
    <property type="project" value="InterPro"/>
</dbReference>
<dbReference type="GO" id="GO:0140662">
    <property type="term" value="F:ATP-dependent protein folding chaperone"/>
    <property type="evidence" value="ECO:0007669"/>
    <property type="project" value="InterPro"/>
</dbReference>
<dbReference type="GO" id="GO:0046983">
    <property type="term" value="F:protein dimerization activity"/>
    <property type="evidence" value="ECO:0007669"/>
    <property type="project" value="InterPro"/>
</dbReference>
<dbReference type="GO" id="GO:0051082">
    <property type="term" value="F:unfolded protein binding"/>
    <property type="evidence" value="ECO:0007669"/>
    <property type="project" value="UniProtKB-UniRule"/>
</dbReference>
<dbReference type="GO" id="GO:0008270">
    <property type="term" value="F:zinc ion binding"/>
    <property type="evidence" value="ECO:0007669"/>
    <property type="project" value="InterPro"/>
</dbReference>
<dbReference type="GO" id="GO:0051301">
    <property type="term" value="P:cell division"/>
    <property type="evidence" value="ECO:0007669"/>
    <property type="project" value="TreeGrafter"/>
</dbReference>
<dbReference type="GO" id="GO:0051603">
    <property type="term" value="P:proteolysis involved in protein catabolic process"/>
    <property type="evidence" value="ECO:0007669"/>
    <property type="project" value="TreeGrafter"/>
</dbReference>
<dbReference type="CDD" id="cd19497">
    <property type="entry name" value="RecA-like_ClpX"/>
    <property type="match status" value="1"/>
</dbReference>
<dbReference type="FunFam" id="1.10.8.60:FF:000002">
    <property type="entry name" value="ATP-dependent Clp protease ATP-binding subunit ClpX"/>
    <property type="match status" value="1"/>
</dbReference>
<dbReference type="FunFam" id="3.40.50.300:FF:000005">
    <property type="entry name" value="ATP-dependent Clp protease ATP-binding subunit ClpX"/>
    <property type="match status" value="1"/>
</dbReference>
<dbReference type="Gene3D" id="1.10.8.60">
    <property type="match status" value="1"/>
</dbReference>
<dbReference type="Gene3D" id="6.20.220.10">
    <property type="entry name" value="ClpX chaperone, C4-type zinc finger domain"/>
    <property type="match status" value="1"/>
</dbReference>
<dbReference type="Gene3D" id="3.40.50.300">
    <property type="entry name" value="P-loop containing nucleotide triphosphate hydrolases"/>
    <property type="match status" value="1"/>
</dbReference>
<dbReference type="HAMAP" id="MF_00175">
    <property type="entry name" value="ClpX"/>
    <property type="match status" value="1"/>
</dbReference>
<dbReference type="InterPro" id="IPR003593">
    <property type="entry name" value="AAA+_ATPase"/>
</dbReference>
<dbReference type="InterPro" id="IPR050052">
    <property type="entry name" value="ATP-dep_Clp_protease_ClpX"/>
</dbReference>
<dbReference type="InterPro" id="IPR003959">
    <property type="entry name" value="ATPase_AAA_core"/>
</dbReference>
<dbReference type="InterPro" id="IPR019489">
    <property type="entry name" value="Clp_ATPase_C"/>
</dbReference>
<dbReference type="InterPro" id="IPR004487">
    <property type="entry name" value="Clp_protease_ATP-bd_su_ClpX"/>
</dbReference>
<dbReference type="InterPro" id="IPR046425">
    <property type="entry name" value="ClpX_bact"/>
</dbReference>
<dbReference type="InterPro" id="IPR027417">
    <property type="entry name" value="P-loop_NTPase"/>
</dbReference>
<dbReference type="InterPro" id="IPR010603">
    <property type="entry name" value="Znf_CppX_C4"/>
</dbReference>
<dbReference type="InterPro" id="IPR038366">
    <property type="entry name" value="Znf_CppX_C4_sf"/>
</dbReference>
<dbReference type="NCBIfam" id="TIGR00382">
    <property type="entry name" value="clpX"/>
    <property type="match status" value="1"/>
</dbReference>
<dbReference type="NCBIfam" id="NF003745">
    <property type="entry name" value="PRK05342.1"/>
    <property type="match status" value="1"/>
</dbReference>
<dbReference type="PANTHER" id="PTHR48102:SF7">
    <property type="entry name" value="ATP-DEPENDENT CLP PROTEASE ATP-BINDING SUBUNIT CLPX-LIKE, MITOCHONDRIAL"/>
    <property type="match status" value="1"/>
</dbReference>
<dbReference type="PANTHER" id="PTHR48102">
    <property type="entry name" value="ATP-DEPENDENT CLP PROTEASE ATP-BINDING SUBUNIT CLPX-LIKE, MITOCHONDRIAL-RELATED"/>
    <property type="match status" value="1"/>
</dbReference>
<dbReference type="Pfam" id="PF07724">
    <property type="entry name" value="AAA_2"/>
    <property type="match status" value="1"/>
</dbReference>
<dbReference type="Pfam" id="PF10431">
    <property type="entry name" value="ClpB_D2-small"/>
    <property type="match status" value="1"/>
</dbReference>
<dbReference type="Pfam" id="PF06689">
    <property type="entry name" value="zf-C4_ClpX"/>
    <property type="match status" value="1"/>
</dbReference>
<dbReference type="SMART" id="SM00382">
    <property type="entry name" value="AAA"/>
    <property type="match status" value="1"/>
</dbReference>
<dbReference type="SMART" id="SM01086">
    <property type="entry name" value="ClpB_D2-small"/>
    <property type="match status" value="1"/>
</dbReference>
<dbReference type="SMART" id="SM00994">
    <property type="entry name" value="zf-C4_ClpX"/>
    <property type="match status" value="1"/>
</dbReference>
<dbReference type="SUPFAM" id="SSF57716">
    <property type="entry name" value="Glucocorticoid receptor-like (DNA-binding domain)"/>
    <property type="match status" value="1"/>
</dbReference>
<dbReference type="SUPFAM" id="SSF52540">
    <property type="entry name" value="P-loop containing nucleoside triphosphate hydrolases"/>
    <property type="match status" value="1"/>
</dbReference>
<dbReference type="PROSITE" id="PS51902">
    <property type="entry name" value="CLPX_ZB"/>
    <property type="match status" value="1"/>
</dbReference>
<evidence type="ECO:0000255" key="1">
    <source>
        <dbReference type="HAMAP-Rule" id="MF_00175"/>
    </source>
</evidence>
<evidence type="ECO:0000255" key="2">
    <source>
        <dbReference type="PROSITE-ProRule" id="PRU01250"/>
    </source>
</evidence>
<sequence length="424" mass="46356">MTDKRKDGSGKLLYCSFCGKSQHEVRKLIAGPSVYICDECVDLCNDIIREEIKEVAPHRERSALPTPHEIRNHLDDYVIGQEQAKKVLAVAVYNHYKRLRNGDTSNGVELGKSNILLIGPTGSGKTLLAETLARLLDVPFTMADATTLTEAGYVGEDVENIIQKLLQKCDYDVQKAQRGIVYIDEIDKISRKSDNPSITRDVSGEGVQQALLKLIEGTVAAVPPQGGRKHPQQEFLQVDTSKILFICGGAFAGLDKVISHRVETGSGIGFGATVKAKSDKASEGELLAQVEPEDLIKFGLIPEFIGRLPVVATLNELSEEALIQILKEPKNALTKQYQALFNLEGVDLEFRDEALDAIAKKAMARKTGARGLRSIVEAALLDTMYDLPSMEDVEKVVIDESVIDGQSKPLLIYGKPEAQQASGE</sequence>
<organism>
    <name type="scientific">Shigella flexneri serotype 5b (strain 8401)</name>
    <dbReference type="NCBI Taxonomy" id="373384"/>
    <lineage>
        <taxon>Bacteria</taxon>
        <taxon>Pseudomonadati</taxon>
        <taxon>Pseudomonadota</taxon>
        <taxon>Gammaproteobacteria</taxon>
        <taxon>Enterobacterales</taxon>
        <taxon>Enterobacteriaceae</taxon>
        <taxon>Shigella</taxon>
    </lineage>
</organism>
<protein>
    <recommendedName>
        <fullName evidence="1">ATP-dependent Clp protease ATP-binding subunit ClpX</fullName>
    </recommendedName>
</protein>
<name>CLPX_SHIF8</name>